<accession>Q92GE0</accession>
<comment type="function">
    <text evidence="1">Catalyzes the NADPH-dependent reduction of beta-ketoacyl-ACP substrates to beta-hydroxyacyl-ACP products, the first reductive step in the elongation cycle of fatty acid biosynthesis.</text>
</comment>
<comment type="catalytic activity">
    <reaction>
        <text>a (3R)-hydroxyacyl-[ACP] + NADP(+) = a 3-oxoacyl-[ACP] + NADPH + H(+)</text>
        <dbReference type="Rhea" id="RHEA:17397"/>
        <dbReference type="Rhea" id="RHEA-COMP:9916"/>
        <dbReference type="Rhea" id="RHEA-COMP:9945"/>
        <dbReference type="ChEBI" id="CHEBI:15378"/>
        <dbReference type="ChEBI" id="CHEBI:57783"/>
        <dbReference type="ChEBI" id="CHEBI:58349"/>
        <dbReference type="ChEBI" id="CHEBI:78776"/>
        <dbReference type="ChEBI" id="CHEBI:78827"/>
        <dbReference type="EC" id="1.1.1.100"/>
    </reaction>
</comment>
<comment type="pathway">
    <text>Lipid metabolism; fatty acid biosynthesis.</text>
</comment>
<comment type="subunit">
    <text evidence="1">Homotetramer.</text>
</comment>
<comment type="similarity">
    <text evidence="3">Belongs to the short-chain dehydrogenases/reductases (SDR) family.</text>
</comment>
<comment type="sequence caution" evidence="3">
    <conflict type="erroneous initiation">
        <sequence resource="EMBL-CDS" id="AAL03721"/>
    </conflict>
    <text>Extended N-terminus.</text>
</comment>
<gene>
    <name type="primary">fabG</name>
    <name type="ordered locus">RC1183</name>
</gene>
<evidence type="ECO:0000250" key="1"/>
<evidence type="ECO:0000255" key="2">
    <source>
        <dbReference type="PROSITE-ProRule" id="PRU10001"/>
    </source>
</evidence>
<evidence type="ECO:0000305" key="3"/>
<organism>
    <name type="scientific">Rickettsia conorii (strain ATCC VR-613 / Malish 7)</name>
    <dbReference type="NCBI Taxonomy" id="272944"/>
    <lineage>
        <taxon>Bacteria</taxon>
        <taxon>Pseudomonadati</taxon>
        <taxon>Pseudomonadota</taxon>
        <taxon>Alphaproteobacteria</taxon>
        <taxon>Rickettsiales</taxon>
        <taxon>Rickettsiaceae</taxon>
        <taxon>Rickettsieae</taxon>
        <taxon>Rickettsia</taxon>
        <taxon>spotted fever group</taxon>
    </lineage>
</organism>
<proteinExistence type="inferred from homology"/>
<sequence length="241" mass="25830">MIDLTGKTSLITGASGGIGGAIARLLHKLGSHVIISGSNEEKLQSLGKVVKDNYTIEVCNLADKEECRNLISKASKLDILVCNAGITSDTLAIRMKDEDFDKVIDINLKANFILNREAIKKMIQNRYGRIINISSIVGISGNPGQANYCASKAGLIGMTKSLSYEVATRGITVNTVAPGFIKSDMTDKLNEKQREAIVQKIPLGTYGMPEDVAHAVAFLASDQASYITGQTIHVNGGMLMV</sequence>
<reference key="1">
    <citation type="journal article" date="2001" name="Science">
        <title>Mechanisms of evolution in Rickettsia conorii and R. prowazekii.</title>
        <authorList>
            <person name="Ogata H."/>
            <person name="Audic S."/>
            <person name="Renesto-Audiffren P."/>
            <person name="Fournier P.-E."/>
            <person name="Barbe V."/>
            <person name="Samson D."/>
            <person name="Roux V."/>
            <person name="Cossart P."/>
            <person name="Weissenbach J."/>
            <person name="Claverie J.-M."/>
            <person name="Raoult D."/>
        </authorList>
    </citation>
    <scope>NUCLEOTIDE SEQUENCE [LARGE SCALE GENOMIC DNA]</scope>
    <source>
        <strain>ATCC VR-613 / Malish 7</strain>
    </source>
</reference>
<feature type="chain" id="PRO_0000286632" description="3-oxoacyl-[acyl-carrier-protein] reductase FabG">
    <location>
        <begin position="1"/>
        <end position="241"/>
    </location>
</feature>
<feature type="active site" description="Proton acceptor" evidence="2">
    <location>
        <position position="148"/>
    </location>
</feature>
<feature type="binding site" evidence="1">
    <location>
        <begin position="13"/>
        <end position="16"/>
    </location>
    <ligand>
        <name>NADP(+)</name>
        <dbReference type="ChEBI" id="CHEBI:58349"/>
    </ligand>
</feature>
<feature type="binding site" evidence="1">
    <location>
        <position position="38"/>
    </location>
    <ligand>
        <name>NADP(+)</name>
        <dbReference type="ChEBI" id="CHEBI:58349"/>
    </ligand>
</feature>
<feature type="binding site" evidence="1">
    <location>
        <begin position="57"/>
        <end position="58"/>
    </location>
    <ligand>
        <name>NADP(+)</name>
        <dbReference type="ChEBI" id="CHEBI:58349"/>
    </ligand>
</feature>
<feature type="binding site" evidence="1">
    <location>
        <position position="83"/>
    </location>
    <ligand>
        <name>NADP(+)</name>
        <dbReference type="ChEBI" id="CHEBI:58349"/>
    </ligand>
</feature>
<feature type="binding site" evidence="1">
    <location>
        <position position="135"/>
    </location>
    <ligand>
        <name>substrate</name>
    </ligand>
</feature>
<feature type="binding site" evidence="1">
    <location>
        <begin position="148"/>
        <end position="152"/>
    </location>
    <ligand>
        <name>NADP(+)</name>
        <dbReference type="ChEBI" id="CHEBI:58349"/>
    </ligand>
</feature>
<feature type="binding site" evidence="1">
    <location>
        <position position="181"/>
    </location>
    <ligand>
        <name>NADP(+)</name>
        <dbReference type="ChEBI" id="CHEBI:58349"/>
    </ligand>
</feature>
<name>FABG_RICCN</name>
<keyword id="KW-0275">Fatty acid biosynthesis</keyword>
<keyword id="KW-0276">Fatty acid metabolism</keyword>
<keyword id="KW-0444">Lipid biosynthesis</keyword>
<keyword id="KW-0443">Lipid metabolism</keyword>
<keyword id="KW-0521">NADP</keyword>
<keyword id="KW-0560">Oxidoreductase</keyword>
<dbReference type="EC" id="1.1.1.100"/>
<dbReference type="EMBL" id="AE006914">
    <property type="protein sequence ID" value="AAL03721.1"/>
    <property type="status" value="ALT_INIT"/>
    <property type="molecule type" value="Genomic_DNA"/>
</dbReference>
<dbReference type="PIR" id="G97847">
    <property type="entry name" value="G97847"/>
</dbReference>
<dbReference type="RefSeq" id="WP_016830954.1">
    <property type="nucleotide sequence ID" value="NC_003103.1"/>
</dbReference>
<dbReference type="SMR" id="Q92GE0"/>
<dbReference type="GeneID" id="928334"/>
<dbReference type="KEGG" id="rco:RC1183"/>
<dbReference type="PATRIC" id="fig|272944.4.peg.1360"/>
<dbReference type="HOGENOM" id="CLU_010194_1_3_5"/>
<dbReference type="UniPathway" id="UPA00094"/>
<dbReference type="Proteomes" id="UP000000816">
    <property type="component" value="Chromosome"/>
</dbReference>
<dbReference type="GO" id="GO:0004316">
    <property type="term" value="F:3-oxoacyl-[acyl-carrier-protein] reductase (NADPH) activity"/>
    <property type="evidence" value="ECO:0000250"/>
    <property type="project" value="UniProtKB"/>
</dbReference>
<dbReference type="GO" id="GO:0051287">
    <property type="term" value="F:NAD binding"/>
    <property type="evidence" value="ECO:0007669"/>
    <property type="project" value="InterPro"/>
</dbReference>
<dbReference type="GO" id="GO:0050661">
    <property type="term" value="F:NADP binding"/>
    <property type="evidence" value="ECO:0000250"/>
    <property type="project" value="UniProtKB"/>
</dbReference>
<dbReference type="GO" id="GO:0030497">
    <property type="term" value="P:fatty acid elongation"/>
    <property type="evidence" value="ECO:0000250"/>
    <property type="project" value="UniProtKB"/>
</dbReference>
<dbReference type="CDD" id="cd05333">
    <property type="entry name" value="BKR_SDR_c"/>
    <property type="match status" value="1"/>
</dbReference>
<dbReference type="FunFam" id="3.40.50.720:FF:000806">
    <property type="entry name" value="3-oxoacyl-[acyl-carrier-protein] reductase FabG"/>
    <property type="match status" value="1"/>
</dbReference>
<dbReference type="Gene3D" id="3.40.50.720">
    <property type="entry name" value="NAD(P)-binding Rossmann-like Domain"/>
    <property type="match status" value="1"/>
</dbReference>
<dbReference type="InterPro" id="IPR011284">
    <property type="entry name" value="3oxo_ACP_reduc"/>
</dbReference>
<dbReference type="InterPro" id="IPR036291">
    <property type="entry name" value="NAD(P)-bd_dom_sf"/>
</dbReference>
<dbReference type="InterPro" id="IPR020904">
    <property type="entry name" value="Sc_DH/Rdtase_CS"/>
</dbReference>
<dbReference type="InterPro" id="IPR050259">
    <property type="entry name" value="SDR"/>
</dbReference>
<dbReference type="InterPro" id="IPR002347">
    <property type="entry name" value="SDR_fam"/>
</dbReference>
<dbReference type="NCBIfam" id="TIGR01830">
    <property type="entry name" value="3oxo_ACP_reduc"/>
    <property type="match status" value="1"/>
</dbReference>
<dbReference type="NCBIfam" id="NF004199">
    <property type="entry name" value="PRK05653.1-4"/>
    <property type="match status" value="1"/>
</dbReference>
<dbReference type="NCBIfam" id="NF005559">
    <property type="entry name" value="PRK07231.1"/>
    <property type="match status" value="1"/>
</dbReference>
<dbReference type="NCBIfam" id="NF009466">
    <property type="entry name" value="PRK12826.1-2"/>
    <property type="match status" value="1"/>
</dbReference>
<dbReference type="PANTHER" id="PTHR42879">
    <property type="entry name" value="3-OXOACYL-(ACYL-CARRIER-PROTEIN) REDUCTASE"/>
    <property type="match status" value="1"/>
</dbReference>
<dbReference type="PANTHER" id="PTHR42879:SF2">
    <property type="entry name" value="3-OXOACYL-[ACYL-CARRIER-PROTEIN] REDUCTASE FABG"/>
    <property type="match status" value="1"/>
</dbReference>
<dbReference type="Pfam" id="PF13561">
    <property type="entry name" value="adh_short_C2"/>
    <property type="match status" value="1"/>
</dbReference>
<dbReference type="PRINTS" id="PR00081">
    <property type="entry name" value="GDHRDH"/>
</dbReference>
<dbReference type="PRINTS" id="PR00080">
    <property type="entry name" value="SDRFAMILY"/>
</dbReference>
<dbReference type="SMART" id="SM00822">
    <property type="entry name" value="PKS_KR"/>
    <property type="match status" value="1"/>
</dbReference>
<dbReference type="SUPFAM" id="SSF51735">
    <property type="entry name" value="NAD(P)-binding Rossmann-fold domains"/>
    <property type="match status" value="1"/>
</dbReference>
<dbReference type="PROSITE" id="PS00061">
    <property type="entry name" value="ADH_SHORT"/>
    <property type="match status" value="1"/>
</dbReference>
<protein>
    <recommendedName>
        <fullName>3-oxoacyl-[acyl-carrier-protein] reductase FabG</fullName>
        <ecNumber>1.1.1.100</ecNumber>
    </recommendedName>
    <alternativeName>
        <fullName>3-ketoacyl-acyl carrier protein reductase</fullName>
    </alternativeName>
    <alternativeName>
        <fullName>Beta-Ketoacyl-acyl carrier protein reductase</fullName>
    </alternativeName>
    <alternativeName>
        <fullName>Beta-ketoacyl-ACP reductase</fullName>
    </alternativeName>
</protein>